<proteinExistence type="inferred from homology"/>
<gene>
    <name evidence="1" type="primary">rplS</name>
    <name type="ordered locus">Geob_1492</name>
</gene>
<comment type="function">
    <text evidence="1">This protein is located at the 30S-50S ribosomal subunit interface and may play a role in the structure and function of the aminoacyl-tRNA binding site.</text>
</comment>
<comment type="similarity">
    <text evidence="1">Belongs to the bacterial ribosomal protein bL19 family.</text>
</comment>
<organism>
    <name type="scientific">Geotalea daltonii (strain DSM 22248 / JCM 15807 / FRC-32)</name>
    <name type="common">Geobacter daltonii</name>
    <dbReference type="NCBI Taxonomy" id="316067"/>
    <lineage>
        <taxon>Bacteria</taxon>
        <taxon>Pseudomonadati</taxon>
        <taxon>Thermodesulfobacteriota</taxon>
        <taxon>Desulfuromonadia</taxon>
        <taxon>Geobacterales</taxon>
        <taxon>Geobacteraceae</taxon>
        <taxon>Geotalea</taxon>
    </lineage>
</organism>
<accession>B9M596</accession>
<name>RL19_GEODF</name>
<sequence length="118" mass="13301">MNKIDAIEMEQMKKNIPGFRPGDTVKVQVKIVEGDKSRIQAFQGVVIGRQNGGIRESFTVRKISNGVGVERSFPLHSPSIDAIEVITRGQVRRAKLYYLRKLRGKASRIKEKKYVAGM</sequence>
<feature type="chain" id="PRO_1000193846" description="Large ribosomal subunit protein bL19">
    <location>
        <begin position="1"/>
        <end position="118"/>
    </location>
</feature>
<keyword id="KW-1185">Reference proteome</keyword>
<keyword id="KW-0687">Ribonucleoprotein</keyword>
<keyword id="KW-0689">Ribosomal protein</keyword>
<dbReference type="EMBL" id="CP001390">
    <property type="protein sequence ID" value="ACM19851.1"/>
    <property type="molecule type" value="Genomic_DNA"/>
</dbReference>
<dbReference type="RefSeq" id="WP_012646580.1">
    <property type="nucleotide sequence ID" value="NC_011979.1"/>
</dbReference>
<dbReference type="SMR" id="B9M596"/>
<dbReference type="STRING" id="316067.Geob_1492"/>
<dbReference type="KEGG" id="geo:Geob_1492"/>
<dbReference type="eggNOG" id="COG0335">
    <property type="taxonomic scope" value="Bacteria"/>
</dbReference>
<dbReference type="HOGENOM" id="CLU_103507_2_1_7"/>
<dbReference type="OrthoDB" id="9803541at2"/>
<dbReference type="Proteomes" id="UP000007721">
    <property type="component" value="Chromosome"/>
</dbReference>
<dbReference type="GO" id="GO:0022625">
    <property type="term" value="C:cytosolic large ribosomal subunit"/>
    <property type="evidence" value="ECO:0007669"/>
    <property type="project" value="TreeGrafter"/>
</dbReference>
<dbReference type="GO" id="GO:0003735">
    <property type="term" value="F:structural constituent of ribosome"/>
    <property type="evidence" value="ECO:0007669"/>
    <property type="project" value="InterPro"/>
</dbReference>
<dbReference type="GO" id="GO:0006412">
    <property type="term" value="P:translation"/>
    <property type="evidence" value="ECO:0007669"/>
    <property type="project" value="UniProtKB-UniRule"/>
</dbReference>
<dbReference type="FunFam" id="2.30.30.790:FF:000001">
    <property type="entry name" value="50S ribosomal protein L19"/>
    <property type="match status" value="1"/>
</dbReference>
<dbReference type="Gene3D" id="2.30.30.790">
    <property type="match status" value="1"/>
</dbReference>
<dbReference type="HAMAP" id="MF_00402">
    <property type="entry name" value="Ribosomal_bL19"/>
    <property type="match status" value="1"/>
</dbReference>
<dbReference type="InterPro" id="IPR001857">
    <property type="entry name" value="Ribosomal_bL19"/>
</dbReference>
<dbReference type="InterPro" id="IPR018257">
    <property type="entry name" value="Ribosomal_bL19_CS"/>
</dbReference>
<dbReference type="InterPro" id="IPR038657">
    <property type="entry name" value="Ribosomal_bL19_sf"/>
</dbReference>
<dbReference type="InterPro" id="IPR008991">
    <property type="entry name" value="Translation_prot_SH3-like_sf"/>
</dbReference>
<dbReference type="NCBIfam" id="TIGR01024">
    <property type="entry name" value="rplS_bact"/>
    <property type="match status" value="1"/>
</dbReference>
<dbReference type="PANTHER" id="PTHR15680:SF9">
    <property type="entry name" value="LARGE RIBOSOMAL SUBUNIT PROTEIN BL19M"/>
    <property type="match status" value="1"/>
</dbReference>
<dbReference type="PANTHER" id="PTHR15680">
    <property type="entry name" value="RIBOSOMAL PROTEIN L19"/>
    <property type="match status" value="1"/>
</dbReference>
<dbReference type="Pfam" id="PF01245">
    <property type="entry name" value="Ribosomal_L19"/>
    <property type="match status" value="1"/>
</dbReference>
<dbReference type="PIRSF" id="PIRSF002191">
    <property type="entry name" value="Ribosomal_L19"/>
    <property type="match status" value="1"/>
</dbReference>
<dbReference type="PRINTS" id="PR00061">
    <property type="entry name" value="RIBOSOMALL19"/>
</dbReference>
<dbReference type="SUPFAM" id="SSF50104">
    <property type="entry name" value="Translation proteins SH3-like domain"/>
    <property type="match status" value="1"/>
</dbReference>
<dbReference type="PROSITE" id="PS01015">
    <property type="entry name" value="RIBOSOMAL_L19"/>
    <property type="match status" value="1"/>
</dbReference>
<evidence type="ECO:0000255" key="1">
    <source>
        <dbReference type="HAMAP-Rule" id="MF_00402"/>
    </source>
</evidence>
<evidence type="ECO:0000305" key="2"/>
<protein>
    <recommendedName>
        <fullName evidence="1">Large ribosomal subunit protein bL19</fullName>
    </recommendedName>
    <alternativeName>
        <fullName evidence="2">50S ribosomal protein L19</fullName>
    </alternativeName>
</protein>
<reference key="1">
    <citation type="submission" date="2009-01" db="EMBL/GenBank/DDBJ databases">
        <title>Complete sequence of Geobacter sp. FRC-32.</title>
        <authorList>
            <consortium name="US DOE Joint Genome Institute"/>
            <person name="Lucas S."/>
            <person name="Copeland A."/>
            <person name="Lapidus A."/>
            <person name="Glavina del Rio T."/>
            <person name="Dalin E."/>
            <person name="Tice H."/>
            <person name="Bruce D."/>
            <person name="Goodwin L."/>
            <person name="Pitluck S."/>
            <person name="Saunders E."/>
            <person name="Brettin T."/>
            <person name="Detter J.C."/>
            <person name="Han C."/>
            <person name="Larimer F."/>
            <person name="Land M."/>
            <person name="Hauser L."/>
            <person name="Kyrpides N."/>
            <person name="Ovchinnikova G."/>
            <person name="Kostka J."/>
            <person name="Richardson P."/>
        </authorList>
    </citation>
    <scope>NUCLEOTIDE SEQUENCE [LARGE SCALE GENOMIC DNA]</scope>
    <source>
        <strain>DSM 22248 / JCM 15807 / FRC-32</strain>
    </source>
</reference>